<dbReference type="EMBL" id="M57544">
    <property type="protein sequence ID" value="AAA42677.1"/>
    <property type="molecule type" value="Genomic_DNA"/>
</dbReference>
<dbReference type="EMBL" id="U18466">
    <property type="protein sequence ID" value="AAA65374.2"/>
    <property type="molecule type" value="Genomic_DNA"/>
</dbReference>
<dbReference type="PIR" id="E43680">
    <property type="entry name" value="E43680"/>
</dbReference>
<dbReference type="RefSeq" id="NP_042838.2">
    <property type="nucleotide sequence ID" value="NC_001659.2"/>
</dbReference>
<dbReference type="GeneID" id="22220374"/>
<dbReference type="KEGG" id="vg:22220374"/>
<dbReference type="Proteomes" id="UP000000624">
    <property type="component" value="Segment"/>
</dbReference>
<dbReference type="GO" id="GO:0042330">
    <property type="term" value="P:taxis"/>
    <property type="evidence" value="ECO:0007669"/>
    <property type="project" value="InterPro"/>
</dbReference>
<dbReference type="InterPro" id="IPR002595">
    <property type="entry name" value="ASFV_MGF360"/>
</dbReference>
<dbReference type="Pfam" id="PF01671">
    <property type="entry name" value="ASFV_360"/>
    <property type="match status" value="1"/>
</dbReference>
<evidence type="ECO:0000269" key="1">
    <source>
    </source>
</evidence>
<evidence type="ECO:0000269" key="2">
    <source>
    </source>
</evidence>
<evidence type="ECO:0000305" key="3"/>
<organism>
    <name type="scientific">African swine fever virus (strain Badajoz 1971 Vero-adapted)</name>
    <name type="common">Ba71V</name>
    <name type="synonym">ASFV</name>
    <dbReference type="NCBI Taxonomy" id="10498"/>
    <lineage>
        <taxon>Viruses</taxon>
        <taxon>Varidnaviria</taxon>
        <taxon>Bamfordvirae</taxon>
        <taxon>Nucleocytoviricota</taxon>
        <taxon>Pokkesviricetes</taxon>
        <taxon>Asfuvirales</taxon>
        <taxon>Asfarviridae</taxon>
        <taxon>Asfivirus</taxon>
        <taxon>African swine fever virus</taxon>
    </lineage>
</organism>
<reference key="1">
    <citation type="journal article" date="1990" name="J. Virol.">
        <title>Multigene families in African swine fever virus: family 360.</title>
        <authorList>
            <person name="Gonzalez A."/>
            <person name="Calvo V."/>
            <person name="Almazan F."/>
            <person name="Almendral J.M."/>
            <person name="Ramirez J.C."/>
            <person name="de la Vega I."/>
            <person name="Blasco R."/>
            <person name="Vinuela E."/>
        </authorList>
    </citation>
    <scope>NUCLEOTIDE SEQUENCE [GENOMIC DNA]</scope>
</reference>
<reference key="2">
    <citation type="journal article" date="1995" name="Virology">
        <title>Analysis of the complete nucleotide sequence of African swine fever virus.</title>
        <authorList>
            <person name="Yanez R.J."/>
            <person name="Rodriguez J.M."/>
            <person name="Nogal M.L."/>
            <person name="Yuste L."/>
            <person name="Enriquez C."/>
            <person name="Rodriguez J.F."/>
            <person name="Vinuela E."/>
        </authorList>
    </citation>
    <scope>NUCLEOTIDE SEQUENCE [LARGE SCALE GENOMIC DNA]</scope>
</reference>
<reference key="3">
    <citation type="submission" date="2014-10" db="EMBL/GenBank/DDBJ databases">
        <authorList>
            <person name="Rodriguez J.M."/>
            <person name="Salas M.L."/>
        </authorList>
    </citation>
    <scope>SEQUENCE REVISION</scope>
</reference>
<reference key="4">
    <citation type="journal article" date="2001" name="J. Virol.">
        <title>African swine fever virus multigene family 360 and 530 genes are novel macrophage host range determinants.</title>
        <authorList>
            <person name="Zsak L."/>
            <person name="Lu Z."/>
            <person name="Burrage T.G."/>
            <person name="Neilan J.G."/>
            <person name="Kutish G.F."/>
            <person name="Moore D.M."/>
            <person name="Rock D.L."/>
        </authorList>
    </citation>
    <scope>FUNCTION</scope>
</reference>
<reference key="5">
    <citation type="journal article" date="2020" name="J. Virol.">
        <title>The African Swine Fever Virus Transcriptome.</title>
        <authorList>
            <person name="Cackett G."/>
            <person name="Matelska D."/>
            <person name="Sykora M."/>
            <person name="Portugal R."/>
            <person name="Malecki M."/>
            <person name="Baehler J."/>
            <person name="Dixon L."/>
            <person name="Werner F."/>
        </authorList>
    </citation>
    <scope>INDUCTION</scope>
</reference>
<keyword id="KW-0244">Early protein</keyword>
<keyword id="KW-1185">Reference proteome</keyword>
<accession>P23163</accession>
<comment type="function">
    <text evidence="1">Plays a role in virus cell tropism, and may be required for efficient virus replication in macrophages.</text>
</comment>
<comment type="induction">
    <text evidence="2">Expressed in the early phase of the viral replicative cycle.</text>
</comment>
<comment type="similarity">
    <text evidence="3">Belongs to the asfivirus MGF 360 family.</text>
</comment>
<name>36016_ASFB7</name>
<proteinExistence type="evidence at transcript level"/>
<sequence>MLSLQTIAKMAVATNTYSKYHYPILKVFGLWWKNSTLNGPIKICNHCNNIMVGEYPMCYNHGMSLDIALIRAVKERNISLVQLFTEWGGNIDYGALCANTPSMQRLCKSLGAKPPKGRMYMDALIHLSDTLNDNDLIRGYEIFDDNSVLDCVNLIRLKIMLTLKARIPLMEQLDQIALKQLLQRYWYAMAVQHNLTTAIHYFDNHIPNIKPFSLRCALYFNDPFKIHDACRTVNMDPNEMMNIACQQDLNFQSIYYSYILGADINQAMLMSLKYGNLSNMWFCIDLGADAFKEAGALAGKKKKSVTAHIRS</sequence>
<protein>
    <recommendedName>
        <fullName>Protein MGF 360-16R</fullName>
    </recommendedName>
</protein>
<gene>
    <name type="ordered locus">BA71V-148</name>
    <name type="ORF">DP311R</name>
</gene>
<organismHost>
    <name type="scientific">Ornithodoros</name>
    <name type="common">relapsing fever ticks</name>
    <dbReference type="NCBI Taxonomy" id="6937"/>
</organismHost>
<organismHost>
    <name type="scientific">Sus scrofa</name>
    <name type="common">Pig</name>
    <dbReference type="NCBI Taxonomy" id="9823"/>
</organismHost>
<feature type="chain" id="PRO_0000221946" description="Protein MGF 360-16R">
    <location>
        <begin position="1"/>
        <end position="311"/>
    </location>
</feature>
<feature type="sequence conflict" description="In Ref. 1; AAA42677." evidence="3" ref="1">
    <original>A</original>
    <variation>R</variation>
    <location>
        <position position="98"/>
    </location>
</feature>